<comment type="function">
    <text evidence="3 5 6 8">Involved in cell wall, plasma membrane, and cytoskeletal organization. Plays a role in endocytosis and hyphal morphogenesis. Required to restrict septin proteins to the bud neck and prevents intracellular growth of cell wall. Contributes to secretion, biofilm formation, and macrophage killing. Essential for resistance to stressful conditions and for invasive growth and virulence.</text>
</comment>
<comment type="subcellular location">
    <subcellularLocation>
        <location evidence="3 4 6">Cell membrane</location>
        <topology evidence="3 4 6">Multi-pass membrane protein</topology>
    </subcellularLocation>
    <text>Localizes at eisosomes, structures which colocalize with sites of protein and lipid endocytosis.</text>
</comment>
<comment type="induction">
    <text evidence="7 9">Induced by fluconazole and down-regulated in absence of GOA1.</text>
</comment>
<comment type="disruption phenotype">
    <text evidence="5">Leads to defective tolerance to cell wall stress and antifungal agents targeting cell wall components, defective plasma membrane structure, defective endocytosis, impaired lipase secretion, SAP2 over-production, increased adherence, aberrant biofilm formation, defective macrophage killing, and decreased virulence in a mouse infection model.</text>
</comment>
<comment type="similarity">
    <text evidence="10">Belongs to the SUR7 family.</text>
</comment>
<evidence type="ECO:0000255" key="1"/>
<evidence type="ECO:0000256" key="2">
    <source>
        <dbReference type="SAM" id="MobiDB-lite"/>
    </source>
</evidence>
<evidence type="ECO:0000269" key="3">
    <source>
    </source>
</evidence>
<evidence type="ECO:0000269" key="4">
    <source>
    </source>
</evidence>
<evidence type="ECO:0000269" key="5">
    <source>
    </source>
</evidence>
<evidence type="ECO:0000269" key="6">
    <source>
    </source>
</evidence>
<evidence type="ECO:0000269" key="7">
    <source>
    </source>
</evidence>
<evidence type="ECO:0000269" key="8">
    <source>
    </source>
</evidence>
<evidence type="ECO:0000269" key="9">
    <source>
    </source>
</evidence>
<evidence type="ECO:0000305" key="10"/>
<keyword id="KW-1003">Cell membrane</keyword>
<keyword id="KW-0961">Cell wall biogenesis/degradation</keyword>
<keyword id="KW-0254">Endocytosis</keyword>
<keyword id="KW-0325">Glycoprotein</keyword>
<keyword id="KW-0472">Membrane</keyword>
<keyword id="KW-0597">Phosphoprotein</keyword>
<keyword id="KW-1185">Reference proteome</keyword>
<keyword id="KW-0732">Signal</keyword>
<keyword id="KW-0346">Stress response</keyword>
<keyword id="KW-0812">Transmembrane</keyword>
<keyword id="KW-1133">Transmembrane helix</keyword>
<keyword id="KW-0843">Virulence</keyword>
<protein>
    <recommendedName>
        <fullName>Protein SUR7</fullName>
    </recommendedName>
</protein>
<organism>
    <name type="scientific">Candida albicans (strain SC5314 / ATCC MYA-2876)</name>
    <name type="common">Yeast</name>
    <dbReference type="NCBI Taxonomy" id="237561"/>
    <lineage>
        <taxon>Eukaryota</taxon>
        <taxon>Fungi</taxon>
        <taxon>Dikarya</taxon>
        <taxon>Ascomycota</taxon>
        <taxon>Saccharomycotina</taxon>
        <taxon>Pichiomycetes</taxon>
        <taxon>Debaryomycetaceae</taxon>
        <taxon>Candida/Lodderomyces clade</taxon>
        <taxon>Candida</taxon>
    </lineage>
</organism>
<sequence length="270" mass="29916">MKVVFTFFNLFFLAGTVLLLIFTVLSGSSKHFPLNKFYWLEADTSGIKNAPANRSAWTFWGVCDKADYSNCLLGPAYPISPEDNFGTTADIPKDFVDNENTYYYLSRFAFAFCLIALAFSGLAFIIDILGFCFEIIDKVVIFLITIGLLFLAGFASLQTAVVVLAKNAFKNDGRYAHIGAKSMGIMWAAFACLLICWLLIFAGTISNSYKKHIARVKAEQGQYSQPTHGPAGDESSFTRAAPPTKDEENTGGIRFFKIKRNQKVSDDESV</sequence>
<feature type="signal peptide" evidence="1">
    <location>
        <begin position="1"/>
        <end position="27"/>
    </location>
</feature>
<feature type="chain" id="PRO_0000424631" description="Protein SUR7">
    <location>
        <begin position="28"/>
        <end position="270"/>
    </location>
</feature>
<feature type="topological domain" description="Extracellular" evidence="1">
    <location>
        <begin position="28"/>
        <end position="107"/>
    </location>
</feature>
<feature type="transmembrane region" description="Helical" evidence="1">
    <location>
        <begin position="108"/>
        <end position="128"/>
    </location>
</feature>
<feature type="topological domain" description="Cytoplasmic" evidence="1">
    <location>
        <begin position="129"/>
        <end position="134"/>
    </location>
</feature>
<feature type="transmembrane region" description="Helical" evidence="1">
    <location>
        <begin position="135"/>
        <end position="155"/>
    </location>
</feature>
<feature type="topological domain" description="Extracellular" evidence="1">
    <location>
        <begin position="156"/>
        <end position="184"/>
    </location>
</feature>
<feature type="transmembrane region" description="Helical" evidence="1">
    <location>
        <begin position="185"/>
        <end position="205"/>
    </location>
</feature>
<feature type="topological domain" description="Cytoplasmic" evidence="1">
    <location>
        <begin position="206"/>
        <end position="270"/>
    </location>
</feature>
<feature type="region of interest" description="Disordered" evidence="2">
    <location>
        <begin position="220"/>
        <end position="253"/>
    </location>
</feature>
<feature type="glycosylation site" description="N-linked (GlcNAc...) asparagine" evidence="1">
    <location>
        <position position="53"/>
    </location>
</feature>
<name>SUR7_CANAL</name>
<proteinExistence type="evidence at protein level"/>
<gene>
    <name type="primary">SUR7</name>
    <name type="ordered locus">CAALFM_C601720CA</name>
    <name type="ORF">CaO19.10917</name>
    <name type="ORF">CaO19.3414</name>
</gene>
<accession>Q5A4M8</accession>
<accession>A0A1D8PPP2</accession>
<accession>O94006</accession>
<dbReference type="EMBL" id="CP017628">
    <property type="protein sequence ID" value="AOW30109.1"/>
    <property type="molecule type" value="Genomic_DNA"/>
</dbReference>
<dbReference type="RefSeq" id="XP_716723.1">
    <property type="nucleotide sequence ID" value="XM_711630.1"/>
</dbReference>
<dbReference type="FunCoup" id="Q5A4M8">
    <property type="interactions" value="67"/>
</dbReference>
<dbReference type="STRING" id="237561.Q5A4M8"/>
<dbReference type="TCDB" id="1.H.1.7.2">
    <property type="family name" value="the claudin tight junction (claudin1) family"/>
</dbReference>
<dbReference type="GlyCosmos" id="Q5A4M8">
    <property type="glycosylation" value="1 site, No reported glycans"/>
</dbReference>
<dbReference type="EnsemblFungi" id="C6_01720C_A-T">
    <property type="protein sequence ID" value="C6_01720C_A-T-p1"/>
    <property type="gene ID" value="C6_01720C_A"/>
</dbReference>
<dbReference type="GeneID" id="3641610"/>
<dbReference type="KEGG" id="cal:CAALFM_C601720CA"/>
<dbReference type="CGD" id="CAL0000180156">
    <property type="gene designation" value="SUR7"/>
</dbReference>
<dbReference type="VEuPathDB" id="FungiDB:C6_01720C_A"/>
<dbReference type="HOGENOM" id="CLU_059603_1_0_1"/>
<dbReference type="InParanoid" id="Q5A4M8"/>
<dbReference type="OMA" id="PLNKFYW"/>
<dbReference type="OrthoDB" id="5419460at2759"/>
<dbReference type="PHI-base" id="PHI:2337"/>
<dbReference type="PRO" id="PR:Q5A4M8"/>
<dbReference type="Proteomes" id="UP000000559">
    <property type="component" value="Chromosome 6"/>
</dbReference>
<dbReference type="GO" id="GO:0005938">
    <property type="term" value="C:cell cortex"/>
    <property type="evidence" value="ECO:0000318"/>
    <property type="project" value="GO_Central"/>
</dbReference>
<dbReference type="GO" id="GO:0032126">
    <property type="term" value="C:eisosome"/>
    <property type="evidence" value="ECO:0000314"/>
    <property type="project" value="CGD"/>
</dbReference>
<dbReference type="GO" id="GO:1903561">
    <property type="term" value="C:extracellular vesicle"/>
    <property type="evidence" value="ECO:0000314"/>
    <property type="project" value="CGD"/>
</dbReference>
<dbReference type="GO" id="GO:0016020">
    <property type="term" value="C:membrane"/>
    <property type="evidence" value="ECO:0000255"/>
    <property type="project" value="CGD"/>
</dbReference>
<dbReference type="GO" id="GO:0045121">
    <property type="term" value="C:membrane raft"/>
    <property type="evidence" value="ECO:0000318"/>
    <property type="project" value="GO_Central"/>
</dbReference>
<dbReference type="GO" id="GO:0005886">
    <property type="term" value="C:plasma membrane"/>
    <property type="evidence" value="ECO:0000314"/>
    <property type="project" value="CGD"/>
</dbReference>
<dbReference type="GO" id="GO:0044853">
    <property type="term" value="C:plasma membrane raft"/>
    <property type="evidence" value="ECO:0000314"/>
    <property type="project" value="CGD"/>
</dbReference>
<dbReference type="GO" id="GO:0042546">
    <property type="term" value="P:cell wall biogenesis"/>
    <property type="evidence" value="ECO:0000315"/>
    <property type="project" value="CGD"/>
</dbReference>
<dbReference type="GO" id="GO:0071280">
    <property type="term" value="P:cellular response to copper ion"/>
    <property type="evidence" value="ECO:0000315"/>
    <property type="project" value="CGD"/>
</dbReference>
<dbReference type="GO" id="GO:0042149">
    <property type="term" value="P:cellular response to glucose starvation"/>
    <property type="evidence" value="ECO:0000315"/>
    <property type="project" value="CGD"/>
</dbReference>
<dbReference type="GO" id="GO:0036244">
    <property type="term" value="P:cellular response to neutral pH"/>
    <property type="evidence" value="ECO:0000315"/>
    <property type="project" value="CGD"/>
</dbReference>
<dbReference type="GO" id="GO:0030866">
    <property type="term" value="P:cortical actin cytoskeleton organization"/>
    <property type="evidence" value="ECO:0000315"/>
    <property type="project" value="CGD"/>
</dbReference>
<dbReference type="GO" id="GO:0006897">
    <property type="term" value="P:endocytosis"/>
    <property type="evidence" value="ECO:0000315"/>
    <property type="project" value="CGD"/>
</dbReference>
<dbReference type="GO" id="GO:0030447">
    <property type="term" value="P:filamentous growth"/>
    <property type="evidence" value="ECO:0000315"/>
    <property type="project" value="CGD"/>
</dbReference>
<dbReference type="GO" id="GO:0036180">
    <property type="term" value="P:filamentous growth of a population of unicellular organisms in response to biotic stimulus"/>
    <property type="evidence" value="ECO:0000315"/>
    <property type="project" value="CGD"/>
</dbReference>
<dbReference type="GO" id="GO:0036171">
    <property type="term" value="P:filamentous growth of a population of unicellular organisms in response to chemical stimulus"/>
    <property type="evidence" value="ECO:0000315"/>
    <property type="project" value="CGD"/>
</dbReference>
<dbReference type="GO" id="GO:0036178">
    <property type="term" value="P:filamentous growth of a population of unicellular organisms in response to neutral pH"/>
    <property type="evidence" value="ECO:0000315"/>
    <property type="project" value="CGD"/>
</dbReference>
<dbReference type="GO" id="GO:0036170">
    <property type="term" value="P:filamentous growth of a population of unicellular organisms in response to starvation"/>
    <property type="evidence" value="ECO:0000315"/>
    <property type="project" value="CGD"/>
</dbReference>
<dbReference type="GO" id="GO:0044180">
    <property type="term" value="P:filamentous growth of a unicellular organism"/>
    <property type="evidence" value="ECO:0000315"/>
    <property type="project" value="CGD"/>
</dbReference>
<dbReference type="GO" id="GO:0031505">
    <property type="term" value="P:fungal-type cell wall organization"/>
    <property type="evidence" value="ECO:0000315"/>
    <property type="project" value="CGD"/>
</dbReference>
<dbReference type="GO" id="GO:0048015">
    <property type="term" value="P:phosphatidylinositol-mediated signaling"/>
    <property type="evidence" value="ECO:0000315"/>
    <property type="project" value="CGD"/>
</dbReference>
<dbReference type="GO" id="GO:0060304">
    <property type="term" value="P:regulation of phosphatidylinositol dephosphorylation"/>
    <property type="evidence" value="ECO:0000315"/>
    <property type="project" value="CGD"/>
</dbReference>
<dbReference type="GO" id="GO:0032185">
    <property type="term" value="P:septin cytoskeleton organization"/>
    <property type="evidence" value="ECO:0000315"/>
    <property type="project" value="CGD"/>
</dbReference>
<dbReference type="GO" id="GO:0044011">
    <property type="term" value="P:single-species biofilm formation on inanimate substrate"/>
    <property type="evidence" value="ECO:0000315"/>
    <property type="project" value="CGD"/>
</dbReference>
<dbReference type="FunFam" id="1.20.140.150:FF:000078">
    <property type="entry name" value="Potential membrane protein"/>
    <property type="match status" value="1"/>
</dbReference>
<dbReference type="Gene3D" id="1.20.140.150">
    <property type="match status" value="1"/>
</dbReference>
<dbReference type="InterPro" id="IPR009571">
    <property type="entry name" value="SUR7/Rim9-like_fungi"/>
</dbReference>
<dbReference type="PANTHER" id="PTHR36414">
    <property type="entry name" value="PROTEIN SUR7"/>
    <property type="match status" value="1"/>
</dbReference>
<dbReference type="PANTHER" id="PTHR36414:SF1">
    <property type="entry name" value="PROTEIN SUR7"/>
    <property type="match status" value="1"/>
</dbReference>
<dbReference type="Pfam" id="PF06687">
    <property type="entry name" value="SUR7"/>
    <property type="match status" value="1"/>
</dbReference>
<reference key="1">
    <citation type="journal article" date="2004" name="Proc. Natl. Acad. Sci. U.S.A.">
        <title>The diploid genome sequence of Candida albicans.</title>
        <authorList>
            <person name="Jones T."/>
            <person name="Federspiel N.A."/>
            <person name="Chibana H."/>
            <person name="Dungan J."/>
            <person name="Kalman S."/>
            <person name="Magee B.B."/>
            <person name="Newport G."/>
            <person name="Thorstenson Y.R."/>
            <person name="Agabian N."/>
            <person name="Magee P.T."/>
            <person name="Davis R.W."/>
            <person name="Scherer S."/>
        </authorList>
    </citation>
    <scope>NUCLEOTIDE SEQUENCE [LARGE SCALE GENOMIC DNA]</scope>
    <source>
        <strain>SC5314 / ATCC MYA-2876</strain>
    </source>
</reference>
<reference key="2">
    <citation type="journal article" date="2007" name="Genome Biol.">
        <title>Assembly of the Candida albicans genome into sixteen supercontigs aligned on the eight chromosomes.</title>
        <authorList>
            <person name="van het Hoog M."/>
            <person name="Rast T.J."/>
            <person name="Martchenko M."/>
            <person name="Grindle S."/>
            <person name="Dignard D."/>
            <person name="Hogues H."/>
            <person name="Cuomo C."/>
            <person name="Berriman M."/>
            <person name="Scherer S."/>
            <person name="Magee B.B."/>
            <person name="Whiteway M."/>
            <person name="Chibana H."/>
            <person name="Nantel A."/>
            <person name="Magee P.T."/>
        </authorList>
    </citation>
    <scope>GENOME REANNOTATION</scope>
    <source>
        <strain>SC5314 / ATCC MYA-2876</strain>
    </source>
</reference>
<reference key="3">
    <citation type="journal article" date="2013" name="Genome Biol.">
        <title>Assembly of a phased diploid Candida albicans genome facilitates allele-specific measurements and provides a simple model for repeat and indel structure.</title>
        <authorList>
            <person name="Muzzey D."/>
            <person name="Schwartz K."/>
            <person name="Weissman J.S."/>
            <person name="Sherlock G."/>
        </authorList>
    </citation>
    <scope>NUCLEOTIDE SEQUENCE [LARGE SCALE GENOMIC DNA]</scope>
    <scope>GENOME REANNOTATION</scope>
    <source>
        <strain>SC5314 / ATCC MYA-2876</strain>
    </source>
</reference>
<reference key="4">
    <citation type="journal article" date="2008" name="Mol. Biol. Cell">
        <title>The Sur7 protein regulates plasma membrane organization and prevents intracellular cell wall growth in Candida albicans.</title>
        <authorList>
            <person name="Alvarez F.J."/>
            <person name="Douglas L.M."/>
            <person name="Rosebrock A."/>
            <person name="Konopka J.B."/>
        </authorList>
    </citation>
    <scope>SUBCELLULAR LOCATION</scope>
    <scope>FUNCTION</scope>
</reference>
<reference key="5">
    <citation type="journal article" date="2009" name="Proteomics">
        <title>Analysis of Candida albicans plasma membrane proteome.</title>
        <authorList>
            <person name="Cabezon V."/>
            <person name="Llama-Palacios A."/>
            <person name="Nombela C."/>
            <person name="Monteoliva L."/>
            <person name="Gil C."/>
        </authorList>
    </citation>
    <scope>IDENTIFICATION BY MASS SPECTROMETRY</scope>
    <scope>SUBCELLULAR LOCATION</scope>
</reference>
<reference key="6">
    <citation type="journal article" date="2010" name="BMC Microbiol.">
        <title>Candida albicans SUR7 contributes to secretion, biofilm formation, and macrophage killing.</title>
        <authorList>
            <person name="Bernardo S.M."/>
            <person name="Lee S.A."/>
        </authorList>
    </citation>
    <scope>FUNCTION</scope>
    <scope>DISRUPTION PHENOTYPE</scope>
</reference>
<reference key="7">
    <citation type="journal article" date="2011" name="Eukaryot. Cell">
        <title>The Candida albicans Sur7 protein is needed for proper synthesis of the fibrillar component of the cell wall that confers strength.</title>
        <authorList>
            <person name="Wang H.X."/>
            <person name="Douglas L.M."/>
            <person name="Aimanianda V."/>
            <person name="Latge J.P."/>
            <person name="Konopka J.B."/>
        </authorList>
    </citation>
    <scope>SUBCELLULAR LOCATION</scope>
    <scope>FUNCTION</scope>
</reference>
<reference key="8">
    <citation type="journal article" date="2011" name="Eukaryot. Cell">
        <title>Effects of fluconazole on the secretome, the wall proteome, and wall integrity of the clinical fungus Candida albicans.</title>
        <authorList>
            <person name="Sorgo A.G."/>
            <person name="Heilmann C.J."/>
            <person name="Dekker H.L."/>
            <person name="Bekker M."/>
            <person name="Brul S."/>
            <person name="de Koster C.G."/>
            <person name="de Koning L.J."/>
            <person name="Klis F.M."/>
        </authorList>
    </citation>
    <scope>INDUCTION</scope>
</reference>
<reference key="9">
    <citation type="journal article" date="2012" name="MBio">
        <title>Sur7 promotes plasma membrane organization and is needed for resistance to stressful conditions and to the invasive growth and virulence of Candida albicans.</title>
        <authorList>
            <person name="Douglas L.M."/>
            <person name="Wang H.X."/>
            <person name="Keppler-Ross S."/>
            <person name="Dean N."/>
            <person name="Konopka J.B."/>
        </authorList>
    </citation>
    <scope>FUNCTION</scope>
</reference>
<reference key="10">
    <citation type="journal article" date="2013" name="Cell. Microbiol.">
        <title>Cell surface changes in the Candida albicans mitochondrial mutant goa1Delta are associated with reduced recognition by innate immune cells.</title>
        <authorList>
            <person name="She X."/>
            <person name="Zhang L."/>
            <person name="Chen H."/>
            <person name="Calderone R."/>
            <person name="Li D."/>
        </authorList>
    </citation>
    <scope>INDUCTION</scope>
</reference>